<proteinExistence type="evidence at transcript level"/>
<organism>
    <name type="scientific">Salmonella typhimurium (strain LT2 / SGSC1412 / ATCC 700720)</name>
    <dbReference type="NCBI Taxonomy" id="99287"/>
    <lineage>
        <taxon>Bacteria</taxon>
        <taxon>Pseudomonadati</taxon>
        <taxon>Pseudomonadota</taxon>
        <taxon>Gammaproteobacteria</taxon>
        <taxon>Enterobacterales</taxon>
        <taxon>Enterobacteriaceae</taxon>
        <taxon>Salmonella</taxon>
    </lineage>
</organism>
<sequence length="96" mass="11234">MHVTLVEINVHDDKVEQFIDVFRQNHLGSIKEPGNLRFDVLQDPQVLTRFYIYEAYVDEQAVAFHKTTPHYKTCVEQLEPLMTGPRTKKVFMGLMP</sequence>
<feature type="chain" id="PRO_0000351573" description="(4S)-4-hydroxy-5-phosphonooxypentane-2,3-dione isomerase">
    <location>
        <begin position="1"/>
        <end position="96"/>
    </location>
</feature>
<feature type="domain" description="ABM" evidence="1">
    <location>
        <begin position="2"/>
        <end position="91"/>
    </location>
</feature>
<evidence type="ECO:0000255" key="1">
    <source>
        <dbReference type="HAMAP-Rule" id="MF_02051"/>
    </source>
</evidence>
<evidence type="ECO:0000269" key="2">
    <source>
    </source>
</evidence>
<evidence type="ECO:0000269" key="3">
    <source>
    </source>
</evidence>
<evidence type="ECO:0000305" key="4"/>
<protein>
    <recommendedName>
        <fullName evidence="1">(4S)-4-hydroxy-5-phosphonooxypentane-2,3-dione isomerase</fullName>
        <ecNumber evidence="1">5.3.1.32</ecNumber>
    </recommendedName>
    <alternativeName>
        <fullName evidence="1">Autoinducer 2-degrading protein LsrG</fullName>
        <shortName evidence="1">AI-2-degrading protein LsrG</shortName>
    </alternativeName>
    <alternativeName>
        <fullName evidence="1">Phospho-(S)-4,5-dihydroxy-2,3-pentanedione isomerase</fullName>
    </alternativeName>
    <alternativeName>
        <fullName evidence="1">Phospho-AI-2 isomerase</fullName>
    </alternativeName>
</protein>
<keyword id="KW-0963">Cytoplasm</keyword>
<keyword id="KW-0413">Isomerase</keyword>
<keyword id="KW-1185">Reference proteome</keyword>
<gene>
    <name evidence="1" type="primary">lsrG</name>
    <name type="ordered locus">STM4079</name>
</gene>
<reference key="1">
    <citation type="journal article" date="2001" name="Nature">
        <title>Complete genome sequence of Salmonella enterica serovar Typhimurium LT2.</title>
        <authorList>
            <person name="McClelland M."/>
            <person name="Sanderson K.E."/>
            <person name="Spieth J."/>
            <person name="Clifton S.W."/>
            <person name="Latreille P."/>
            <person name="Courtney L."/>
            <person name="Porwollik S."/>
            <person name="Ali J."/>
            <person name="Dante M."/>
            <person name="Du F."/>
            <person name="Hou S."/>
            <person name="Layman D."/>
            <person name="Leonard S."/>
            <person name="Nguyen C."/>
            <person name="Scott K."/>
            <person name="Holmes A."/>
            <person name="Grewal N."/>
            <person name="Mulvaney E."/>
            <person name="Ryan E."/>
            <person name="Sun H."/>
            <person name="Florea L."/>
            <person name="Miller W."/>
            <person name="Stoneking T."/>
            <person name="Nhan M."/>
            <person name="Waterston R."/>
            <person name="Wilson R.K."/>
        </authorList>
    </citation>
    <scope>NUCLEOTIDE SEQUENCE [LARGE SCALE GENOMIC DNA]</scope>
    <source>
        <strain>LT2 / SGSC1412 / ATCC 700720</strain>
    </source>
</reference>
<reference key="2">
    <citation type="journal article" date="2001" name="Mol. Microbiol.">
        <title>The LuxS-dependent autoinducer AI-2 controls the expression of an ABC transporter that functions in AI-2 uptake in Salmonella typhimurium.</title>
        <authorList>
            <person name="Taga M.E."/>
            <person name="Semmelhack J.L."/>
            <person name="Bassler B.L."/>
        </authorList>
    </citation>
    <scope>INDUCTION</scope>
    <source>
        <strain>ATCC 14028 / SGSG 2980 / CDC 6516-60 / NCTC 12023</strain>
    </source>
</reference>
<reference key="3">
    <citation type="journal article" date="2003" name="Mol. Microbiol.">
        <title>Lsr-mediated transport and processing of AI-2 in Salmonella typhimurium.</title>
        <authorList>
            <person name="Taga M.E."/>
            <person name="Miller S.T."/>
            <person name="Bassler B.L."/>
        </authorList>
    </citation>
    <scope>PRELIMINARY FUNCTION</scope>
    <scope>INDUCTION</scope>
    <source>
        <strain>ATCC 14028 / SGSG 2980 / CDC 6516-60 / NCTC 12023</strain>
    </source>
</reference>
<accession>Q8ZKP9</accession>
<comment type="function">
    <text evidence="1">Involved in the degradation of phospho-AI-2, thereby terminating induction of the lsr operon and closing the AI-2 signaling cycle. Catalyzes the conversion of (4S)-4-hydroxy-5-phosphonooxypentane-2,3-dione (P-DPD) to 3-hydroxy-5-phosphonooxypentane-2,4-dione (P-HPD).</text>
</comment>
<comment type="catalytic activity">
    <reaction evidence="1">
        <text>(2S)-2-hydroxy-3,4-dioxopentyl phosphate = 3-hydroxy-2,4-dioxopentyl phosphate</text>
        <dbReference type="Rhea" id="RHEA:44360"/>
        <dbReference type="ChEBI" id="CHEBI:71677"/>
        <dbReference type="ChEBI" id="CHEBI:84359"/>
        <dbReference type="EC" id="5.3.1.32"/>
    </reaction>
</comment>
<comment type="subunit">
    <text evidence="1">Homodimer.</text>
</comment>
<comment type="subcellular location">
    <subcellularLocation>
        <location evidence="1">Cytoplasm</location>
    </subcellularLocation>
</comment>
<comment type="induction">
    <text evidence="2 3">In the absence of AI-2, repressed by LsrR. Induced by AI-2, via release of the LsrR repressor.</text>
</comment>
<comment type="similarity">
    <text evidence="1">Belongs to the LsrG family.</text>
</comment>
<comment type="sequence caution" evidence="4">
    <conflict type="erroneous initiation">
        <sequence resource="EMBL-CDS" id="AAL22919"/>
    </conflict>
    <text>Extended N-terminus.</text>
</comment>
<dbReference type="EC" id="5.3.1.32" evidence="1"/>
<dbReference type="EMBL" id="AE006468">
    <property type="protein sequence ID" value="AAL22919.1"/>
    <property type="status" value="ALT_INIT"/>
    <property type="molecule type" value="Genomic_DNA"/>
</dbReference>
<dbReference type="RefSeq" id="WP_000216053.1">
    <property type="nucleotide sequence ID" value="NC_003197.2"/>
</dbReference>
<dbReference type="SMR" id="Q8ZKP9"/>
<dbReference type="STRING" id="99287.STM4079"/>
<dbReference type="PaxDb" id="99287-STM4079"/>
<dbReference type="KEGG" id="stm:STM4079"/>
<dbReference type="HOGENOM" id="CLU_131496_3_0_6"/>
<dbReference type="OMA" id="KETAHYQ"/>
<dbReference type="PhylomeDB" id="Q8ZKP9"/>
<dbReference type="Proteomes" id="UP000001014">
    <property type="component" value="Chromosome"/>
</dbReference>
<dbReference type="GO" id="GO:0005829">
    <property type="term" value="C:cytosol"/>
    <property type="evidence" value="ECO:0000318"/>
    <property type="project" value="GO_Central"/>
</dbReference>
<dbReference type="GO" id="GO:0002952">
    <property type="term" value="F:(4S)-4-hydroxy-5-phosphonooxypentane-2,3-dione isomerase activity"/>
    <property type="evidence" value="ECO:0007669"/>
    <property type="project" value="UniProtKB-EC"/>
</dbReference>
<dbReference type="GO" id="GO:0016491">
    <property type="term" value="F:oxidoreductase activity"/>
    <property type="evidence" value="ECO:0000318"/>
    <property type="project" value="GO_Central"/>
</dbReference>
<dbReference type="FunFam" id="3.30.70.100:FF:000016">
    <property type="entry name" value="(4S)-4-hydroxy-5-phosphonooxypentane-2,3-dione isomerase"/>
    <property type="match status" value="1"/>
</dbReference>
<dbReference type="Gene3D" id="3.30.70.100">
    <property type="match status" value="1"/>
</dbReference>
<dbReference type="HAMAP" id="MF_02051">
    <property type="entry name" value="LsrG"/>
    <property type="match status" value="1"/>
</dbReference>
<dbReference type="InterPro" id="IPR007138">
    <property type="entry name" value="ABM_dom"/>
</dbReference>
<dbReference type="InterPro" id="IPR050744">
    <property type="entry name" value="AI-2_Isomerase_LsrG"/>
</dbReference>
<dbReference type="InterPro" id="IPR011008">
    <property type="entry name" value="Dimeric_a/b-barrel"/>
</dbReference>
<dbReference type="InterPro" id="IPR033672">
    <property type="entry name" value="LsrG"/>
</dbReference>
<dbReference type="NCBIfam" id="NF007791">
    <property type="entry name" value="PRK10486.1"/>
    <property type="match status" value="1"/>
</dbReference>
<dbReference type="PANTHER" id="PTHR33336:SF1">
    <property type="entry name" value="(4S)-4-HYDROXY-5-PHOSPHONOOXYPENTANE-2,3-DIONE ISOMERASE"/>
    <property type="match status" value="1"/>
</dbReference>
<dbReference type="PANTHER" id="PTHR33336">
    <property type="entry name" value="QUINOL MONOOXYGENASE YGIN-RELATED"/>
    <property type="match status" value="1"/>
</dbReference>
<dbReference type="Pfam" id="PF03992">
    <property type="entry name" value="ABM"/>
    <property type="match status" value="1"/>
</dbReference>
<dbReference type="SUPFAM" id="SSF54909">
    <property type="entry name" value="Dimeric alpha+beta barrel"/>
    <property type="match status" value="1"/>
</dbReference>
<dbReference type="PROSITE" id="PS51725">
    <property type="entry name" value="ABM"/>
    <property type="match status" value="1"/>
</dbReference>
<name>LSRG_SALTY</name>